<proteinExistence type="evidence at protein level"/>
<comment type="function">
    <text evidence="1 3 9">Plays a critical role as a guanine nucleotide exchange factor (GEF) for CDC42 in several intracellular processes associated with the actin and microtubule cytoskeleton. Regulates the structure of apical junctions in epithelial cells (By similarity). Participates in the normal lumenogenesis of epithelial cell cysts by regulating spindle orientation (By similarity). Plays a role in ciliogenesis (By similarity). May play a role in membrane trafficking between the cell surface and the Golgi (PubMed:14506234).</text>
</comment>
<comment type="subunit">
    <text evidence="3 9">Binds DNM1 via its N-terminal SH3 domains (PubMed:14506234). The C-terminal SH3 domain binds a complex containing actin, tubulin, Hsp70 and actin-regulatory proteins, such as ENAH, EVL, WIRE, CR16, WAVE1 and NAP1L1 (PubMed:14506234). Interacts with FASLG (By similarity). Interacts (via SH3 domain 6) with WASL (By similarity). Interacts (via SH3 domain 6) interacts with ENAH (By similarity). Interacts (via C-terminal domain) with TJP1; required for the apical cell-cell junction localization of DNMBP (By similarity).</text>
</comment>
<comment type="subcellular location">
    <subcellularLocation>
        <location evidence="9">Cytoplasm</location>
    </subcellularLocation>
    <subcellularLocation>
        <location evidence="9">Golgi apparatus</location>
        <location evidence="9">Golgi stack</location>
    </subcellularLocation>
    <subcellularLocation>
        <location evidence="9">Cytoplasm</location>
        <location evidence="9">Cytoskeleton</location>
    </subcellularLocation>
    <subcellularLocation>
        <location evidence="2">Synapse</location>
    </subcellularLocation>
    <subcellularLocation>
        <location evidence="3">Cell junction</location>
    </subcellularLocation>
    <text evidence="3">Localizes to the apical junction, colocalizes with TJP1.</text>
</comment>
<comment type="alternative products">
    <event type="alternative splicing"/>
    <isoform>
        <id>Q6TXD4-1</id>
        <name>1</name>
        <sequence type="displayed"/>
    </isoform>
    <isoform>
        <id>Q6TXD4-2</id>
        <name>2</name>
        <sequence type="described" ref="VSP_012081 VSP_012082 VSP_012083"/>
    </isoform>
</comment>
<comment type="sequence caution" evidence="12">
    <conflict type="frameshift">
        <sequence resource="EMBL-CDS" id="BAC25293"/>
    </conflict>
</comment>
<comment type="sequence caution" evidence="12">
    <conflict type="erroneous initiation">
        <sequence resource="EMBL-CDS" id="BAC98071"/>
    </conflict>
</comment>
<sequence>MEPGSMVRAIFDFCPSVSEELPLFVGDVIEVLAVVDEFWLLGKKEDVTGQFPSSFVEIVTIPSLKEGERLFVCICEFVSRELNSLSLHRGDLVILDDSAPTAGWLQGRSCWGAWGFFPSSCVQELCLSSRSRRWHAQSALLQAPEYSLGQARALMGLSAQLDEELDFREGDLITIIGVPEPGWFEGELEGRRGIFPEGFVELLGPLRTVDESVNSRSGDDSAVNGEVDVPPEEAESGGDEDDQQSGTYGIALYRFQALETNELDFEVGDRIQILGTLEDGWLEGCLKGKTGVFPHRFVKLCPSNRTEETTAQPQESSFPKDSESSVGKSGDSVVEEARQEPWECEEERPDYDLPGQASVPQDHVAPEWTGDTISGQDKDASGSSPDVDLERPLAKDLSTPDPSEEVNGVSSQPQVPIHPKVQKSQHYLTAGGSHQTSDPFSELVPLEARTRDYSSLPPRRTYAQGWSFQKPASHLQRASSLTASRLDRPSHFCHPAMASYAQKHQTSTENTASLHDPPERPERRPGLQDRGPATDITTASQGDSLDLDSKLTQQLIEFEKSLSGPSTEPETIVRRFSIMDFYSEKDIVRGSSNSLPSQAFPERRKTLRPPPPRPRTPTPISSHLLVDQSPKPVPTLVVRPSRPAPLPPPAQQRMNTASPKPTSCAHPGWEAPEKEDSEHMEKSPAQTFPCPSMLARIRDVEQDLDTCTRAQEELNLLLEEKQDDPSRAETLETLRSYESTIQSLTLELQQLRDMTLLSSQSSSLAAPFGSVSTENPEQRMLEKRAKVVAELLQTERDYIRDLEMCIERVMVPLQQAQVPNVDFEGLFGNMQTVIKVSKQLLAALEISDAVGMSSCDCLVPGPVFLDHRDELEGTYRVYCQNHDEAISLLEMYEKDEKTQKHLQDYLADLKGCTNYINLGSFLIKPVQRIMRYPLLLMELLNSTPESHPDKVPLTNAVLAVKEINVNINEYKRRKDLVLKYRKGDEDSLMEKISKLNIHSIIKKSSRVSSHLKHLTGFAPQLKDEVFEETEKNFRMQERLIKSFIRDLSLYLQHIRESACVKVVAAMSIWDLCMERGHHDLEQFEKVHRYISDQLFTRFKERTERLVINPLNQLLNMFTGPYKLVQKRFDKLLDFYNCTERAEKLKDKKTLEELQSARNNYEALNSQLLDELPKFQQYAQSLFTNCIHGYAEAHCDFVQQALEQLQPLLSLLKATDREGNLIAIFLEEHSRVLQQLQVFTFFPESLPAPRKPFERKTTDRQSSRKTLLGMPSYMLQSEELRSSLLARYPPEKLFHVQRNFNAAQDLDVSLLEGDLVGVIKKKDPMGSQNRWLVDNGVTKGFVYSSFLKPYNPRCSHSDASVASHSSTESEHSGSSPGCHRQNSHSALTFNSNNMTVSFTSGLALTQPQDASPLKDCAHETLAVSWNTGHPETGPSTCSSDPGFSCQRRLGNPADGARDISQPASTLRGCQRSSPHSEVVGYSVPGRNDQGSDSIKGSARVCQAPEDRDRGVGSSETEGNQVYFAIYTFKARNPNELSVLANQRLRIHEFKDVTGNTEWWLAEVNGRKGYVPSNYIRKTEYT</sequence>
<accession>Q6TXD4</accession>
<accession>Q6ZQ05</accession>
<accession>Q8CEW8</accession>
<accession>Q8R0Y2</accession>
<organism>
    <name type="scientific">Mus musculus</name>
    <name type="common">Mouse</name>
    <dbReference type="NCBI Taxonomy" id="10090"/>
    <lineage>
        <taxon>Eukaryota</taxon>
        <taxon>Metazoa</taxon>
        <taxon>Chordata</taxon>
        <taxon>Craniata</taxon>
        <taxon>Vertebrata</taxon>
        <taxon>Euteleostomi</taxon>
        <taxon>Mammalia</taxon>
        <taxon>Eutheria</taxon>
        <taxon>Euarchontoglires</taxon>
        <taxon>Glires</taxon>
        <taxon>Rodentia</taxon>
        <taxon>Myomorpha</taxon>
        <taxon>Muroidea</taxon>
        <taxon>Muridae</taxon>
        <taxon>Murinae</taxon>
        <taxon>Mus</taxon>
        <taxon>Mus</taxon>
    </lineage>
</organism>
<keyword id="KW-0007">Acetylation</keyword>
<keyword id="KW-0025">Alternative splicing</keyword>
<keyword id="KW-0965">Cell junction</keyword>
<keyword id="KW-0175">Coiled coil</keyword>
<keyword id="KW-0963">Cytoplasm</keyword>
<keyword id="KW-0206">Cytoskeleton</keyword>
<keyword id="KW-0333">Golgi apparatus</keyword>
<keyword id="KW-0344">Guanine-nucleotide releasing factor</keyword>
<keyword id="KW-0597">Phosphoprotein</keyword>
<keyword id="KW-1185">Reference proteome</keyword>
<keyword id="KW-0677">Repeat</keyword>
<keyword id="KW-0728">SH3 domain</keyword>
<keyword id="KW-0770">Synapse</keyword>
<name>DNMBP_MOUSE</name>
<evidence type="ECO:0000250" key="1">
    <source>
        <dbReference type="UniProtKB" id="E2RP94"/>
    </source>
</evidence>
<evidence type="ECO:0000250" key="2">
    <source>
        <dbReference type="UniProtKB" id="M0R4F8"/>
    </source>
</evidence>
<evidence type="ECO:0000250" key="3">
    <source>
        <dbReference type="UniProtKB" id="Q6XZF7"/>
    </source>
</evidence>
<evidence type="ECO:0000255" key="4"/>
<evidence type="ECO:0000255" key="5">
    <source>
        <dbReference type="PROSITE-ProRule" id="PRU00062"/>
    </source>
</evidence>
<evidence type="ECO:0000255" key="6">
    <source>
        <dbReference type="PROSITE-ProRule" id="PRU00192"/>
    </source>
</evidence>
<evidence type="ECO:0000255" key="7">
    <source>
        <dbReference type="PROSITE-ProRule" id="PRU00361"/>
    </source>
</evidence>
<evidence type="ECO:0000256" key="8">
    <source>
        <dbReference type="SAM" id="MobiDB-lite"/>
    </source>
</evidence>
<evidence type="ECO:0000269" key="9">
    <source>
    </source>
</evidence>
<evidence type="ECO:0000303" key="10">
    <source>
    </source>
</evidence>
<evidence type="ECO:0000303" key="11">
    <source>
    </source>
</evidence>
<evidence type="ECO:0000305" key="12"/>
<evidence type="ECO:0000305" key="13">
    <source>
    </source>
</evidence>
<evidence type="ECO:0000312" key="14">
    <source>
        <dbReference type="MGI" id="MGI:1917352"/>
    </source>
</evidence>
<dbReference type="EMBL" id="AY383729">
    <property type="protein sequence ID" value="AAQ81299.1"/>
    <property type="molecule type" value="mRNA"/>
</dbReference>
<dbReference type="EMBL" id="AK129261">
    <property type="protein sequence ID" value="BAC98071.1"/>
    <property type="status" value="ALT_INIT"/>
    <property type="molecule type" value="mRNA"/>
</dbReference>
<dbReference type="EMBL" id="AK010367">
    <property type="protein sequence ID" value="BAC25293.1"/>
    <property type="status" value="ALT_FRAME"/>
    <property type="molecule type" value="mRNA"/>
</dbReference>
<dbReference type="EMBL" id="BC025944">
    <property type="protein sequence ID" value="AAH25944.1"/>
    <property type="molecule type" value="mRNA"/>
</dbReference>
<dbReference type="CCDS" id="CCDS29839.1">
    <molecule id="Q6TXD4-1"/>
</dbReference>
<dbReference type="CCDS" id="CCDS84442.1">
    <molecule id="Q6TXD4-2"/>
</dbReference>
<dbReference type="RefSeq" id="NP_001293017.1">
    <property type="nucleotide sequence ID" value="NM_001306088.1"/>
</dbReference>
<dbReference type="RefSeq" id="NP_082305.1">
    <property type="nucleotide sequence ID" value="NM_028029.4"/>
</dbReference>
<dbReference type="SMR" id="Q6TXD4"/>
<dbReference type="BioGRID" id="215065">
    <property type="interactions" value="14"/>
</dbReference>
<dbReference type="FunCoup" id="Q6TXD4">
    <property type="interactions" value="79"/>
</dbReference>
<dbReference type="STRING" id="10090.ENSMUSP00000148582"/>
<dbReference type="iPTMnet" id="Q6TXD4"/>
<dbReference type="PhosphoSitePlus" id="Q6TXD4"/>
<dbReference type="jPOST" id="Q6TXD4"/>
<dbReference type="PaxDb" id="10090-ENSMUSP00000026209"/>
<dbReference type="PeptideAtlas" id="Q6TXD4"/>
<dbReference type="ProteomicsDB" id="279747">
    <molecule id="Q6TXD4-1"/>
</dbReference>
<dbReference type="ProteomicsDB" id="279748">
    <molecule id="Q6TXD4-2"/>
</dbReference>
<dbReference type="Pumba" id="Q6TXD4"/>
<dbReference type="DNASU" id="71972"/>
<dbReference type="GeneID" id="71972"/>
<dbReference type="KEGG" id="mmu:71972"/>
<dbReference type="UCSC" id="uc008hox.2">
    <molecule id="Q6TXD4-2"/>
    <property type="organism name" value="mouse"/>
</dbReference>
<dbReference type="UCSC" id="uc033hkq.1">
    <molecule id="Q6TXD4-1"/>
    <property type="organism name" value="mouse"/>
</dbReference>
<dbReference type="AGR" id="MGI:1917352"/>
<dbReference type="CTD" id="23268"/>
<dbReference type="MGI" id="MGI:1917352">
    <property type="gene designation" value="Dnmbp"/>
</dbReference>
<dbReference type="eggNOG" id="KOG3519">
    <property type="taxonomic scope" value="Eukaryota"/>
</dbReference>
<dbReference type="eggNOG" id="KOG4225">
    <property type="taxonomic scope" value="Eukaryota"/>
</dbReference>
<dbReference type="InParanoid" id="Q6TXD4"/>
<dbReference type="OrthoDB" id="27823at2759"/>
<dbReference type="PhylomeDB" id="Q6TXD4"/>
<dbReference type="TreeFam" id="TF330015"/>
<dbReference type="Reactome" id="R-MMU-9013148">
    <property type="pathway name" value="CDC42 GTPase cycle"/>
</dbReference>
<dbReference type="BioGRID-ORCS" id="71972">
    <property type="hits" value="1 hit in 60 CRISPR screens"/>
</dbReference>
<dbReference type="ChiTaRS" id="Dnmbp">
    <property type="organism name" value="mouse"/>
</dbReference>
<dbReference type="PRO" id="PR:Q6TXD4"/>
<dbReference type="Proteomes" id="UP000000589">
    <property type="component" value="Unplaced"/>
</dbReference>
<dbReference type="RNAct" id="Q6TXD4">
    <property type="molecule type" value="protein"/>
</dbReference>
<dbReference type="GO" id="GO:0005911">
    <property type="term" value="C:cell-cell junction"/>
    <property type="evidence" value="ECO:0000250"/>
    <property type="project" value="UniProtKB"/>
</dbReference>
<dbReference type="GO" id="GO:0005856">
    <property type="term" value="C:cytoskeleton"/>
    <property type="evidence" value="ECO:0007669"/>
    <property type="project" value="UniProtKB-SubCell"/>
</dbReference>
<dbReference type="GO" id="GO:0005794">
    <property type="term" value="C:Golgi apparatus"/>
    <property type="evidence" value="ECO:0000250"/>
    <property type="project" value="UniProtKB"/>
</dbReference>
<dbReference type="GO" id="GO:0005795">
    <property type="term" value="C:Golgi stack"/>
    <property type="evidence" value="ECO:0007669"/>
    <property type="project" value="UniProtKB-SubCell"/>
</dbReference>
<dbReference type="GO" id="GO:0098793">
    <property type="term" value="C:presynapse"/>
    <property type="evidence" value="ECO:0000250"/>
    <property type="project" value="UniProtKB"/>
</dbReference>
<dbReference type="GO" id="GO:0045202">
    <property type="term" value="C:synapse"/>
    <property type="evidence" value="ECO:0000250"/>
    <property type="project" value="UniProtKB"/>
</dbReference>
<dbReference type="GO" id="GO:0005085">
    <property type="term" value="F:guanyl-nucleotide exchange factor activity"/>
    <property type="evidence" value="ECO:0000314"/>
    <property type="project" value="UniProtKB"/>
</dbReference>
<dbReference type="GO" id="GO:0035556">
    <property type="term" value="P:intracellular signal transduction"/>
    <property type="evidence" value="ECO:0007669"/>
    <property type="project" value="InterPro"/>
</dbReference>
<dbReference type="GO" id="GO:0008360">
    <property type="term" value="P:regulation of cell shape"/>
    <property type="evidence" value="ECO:0000250"/>
    <property type="project" value="UniProtKB"/>
</dbReference>
<dbReference type="CDD" id="cd07589">
    <property type="entry name" value="BAR_DNMBP"/>
    <property type="match status" value="1"/>
</dbReference>
<dbReference type="CDD" id="cd00160">
    <property type="entry name" value="RhoGEF"/>
    <property type="match status" value="1"/>
</dbReference>
<dbReference type="CDD" id="cd11798">
    <property type="entry name" value="SH3_DNMBP_C1"/>
    <property type="match status" value="1"/>
</dbReference>
<dbReference type="CDD" id="cd12141">
    <property type="entry name" value="SH3_DNMBP_C2"/>
    <property type="match status" value="1"/>
</dbReference>
<dbReference type="CDD" id="cd11794">
    <property type="entry name" value="SH3_DNMBP_N1"/>
    <property type="match status" value="1"/>
</dbReference>
<dbReference type="CDD" id="cd11795">
    <property type="entry name" value="SH3_DNMBP_N2"/>
    <property type="match status" value="1"/>
</dbReference>
<dbReference type="CDD" id="cd11796">
    <property type="entry name" value="SH3_DNMBP_N3"/>
    <property type="match status" value="1"/>
</dbReference>
<dbReference type="FunFam" id="1.20.1270.60:FF:000027">
    <property type="entry name" value="dynamin-binding protein isoform X1"/>
    <property type="match status" value="1"/>
</dbReference>
<dbReference type="FunFam" id="2.30.30.40:FF:000066">
    <property type="entry name" value="dynamin-binding protein isoform X1"/>
    <property type="match status" value="1"/>
</dbReference>
<dbReference type="FunFam" id="2.30.30.40:FF:000084">
    <property type="entry name" value="dynamin-binding protein isoform X1"/>
    <property type="match status" value="1"/>
</dbReference>
<dbReference type="FunFam" id="2.30.30.40:FF:000120">
    <property type="entry name" value="dynamin-binding protein isoform X1"/>
    <property type="match status" value="1"/>
</dbReference>
<dbReference type="FunFam" id="2.30.30.40:FF:000138">
    <property type="entry name" value="dynamin-binding protein isoform X1"/>
    <property type="match status" value="1"/>
</dbReference>
<dbReference type="FunFam" id="2.30.30.40:FF:000160">
    <property type="entry name" value="dynamin-binding protein isoform X1"/>
    <property type="match status" value="1"/>
</dbReference>
<dbReference type="FunFam" id="2.30.30.40:FF:000165">
    <property type="entry name" value="dynamin-binding protein isoform X1"/>
    <property type="match status" value="1"/>
</dbReference>
<dbReference type="FunFam" id="1.20.900.10:FF:000023">
    <property type="entry name" value="dynamin-binding protein isoform X2"/>
    <property type="match status" value="1"/>
</dbReference>
<dbReference type="Gene3D" id="1.20.1270.60">
    <property type="entry name" value="Arfaptin homology (AH) domain/BAR domain"/>
    <property type="match status" value="1"/>
</dbReference>
<dbReference type="Gene3D" id="1.20.900.10">
    <property type="entry name" value="Dbl homology (DH) domain"/>
    <property type="match status" value="1"/>
</dbReference>
<dbReference type="Gene3D" id="2.30.30.40">
    <property type="entry name" value="SH3 Domains"/>
    <property type="match status" value="6"/>
</dbReference>
<dbReference type="InterPro" id="IPR027267">
    <property type="entry name" value="AH/BAR_dom_sf"/>
</dbReference>
<dbReference type="InterPro" id="IPR004148">
    <property type="entry name" value="BAR_dom"/>
</dbReference>
<dbReference type="InterPro" id="IPR035899">
    <property type="entry name" value="DBL_dom_sf"/>
</dbReference>
<dbReference type="InterPro" id="IPR000219">
    <property type="entry name" value="DH_dom"/>
</dbReference>
<dbReference type="InterPro" id="IPR035820">
    <property type="entry name" value="DNMBP_SH3_C1"/>
</dbReference>
<dbReference type="InterPro" id="IPR035817">
    <property type="entry name" value="DNMBP_SH3_N1"/>
</dbReference>
<dbReference type="InterPro" id="IPR035818">
    <property type="entry name" value="DNMBP_SH3_N2"/>
</dbReference>
<dbReference type="InterPro" id="IPR035819">
    <property type="entry name" value="DNMBP_SH3_N3"/>
</dbReference>
<dbReference type="InterPro" id="IPR051492">
    <property type="entry name" value="Dynamin-Rho_GEF"/>
</dbReference>
<dbReference type="InterPro" id="IPR001331">
    <property type="entry name" value="GDS_CDC24_CS"/>
</dbReference>
<dbReference type="InterPro" id="IPR036028">
    <property type="entry name" value="SH3-like_dom_sf"/>
</dbReference>
<dbReference type="InterPro" id="IPR001452">
    <property type="entry name" value="SH3_domain"/>
</dbReference>
<dbReference type="PANTHER" id="PTHR22834:SF19">
    <property type="entry name" value="DYNAMIN-BINDING PROTEIN"/>
    <property type="match status" value="1"/>
</dbReference>
<dbReference type="PANTHER" id="PTHR22834">
    <property type="entry name" value="NUCLEAR FUSION PROTEIN FUS2"/>
    <property type="match status" value="1"/>
</dbReference>
<dbReference type="Pfam" id="PF03114">
    <property type="entry name" value="BAR"/>
    <property type="match status" value="1"/>
</dbReference>
<dbReference type="Pfam" id="PF00621">
    <property type="entry name" value="RhoGEF"/>
    <property type="match status" value="1"/>
</dbReference>
<dbReference type="Pfam" id="PF00018">
    <property type="entry name" value="SH3_1"/>
    <property type="match status" value="2"/>
</dbReference>
<dbReference type="Pfam" id="PF07653">
    <property type="entry name" value="SH3_2"/>
    <property type="match status" value="1"/>
</dbReference>
<dbReference type="Pfam" id="PF14604">
    <property type="entry name" value="SH3_9"/>
    <property type="match status" value="2"/>
</dbReference>
<dbReference type="PRINTS" id="PR00499">
    <property type="entry name" value="P67PHOX"/>
</dbReference>
<dbReference type="SMART" id="SM00721">
    <property type="entry name" value="BAR"/>
    <property type="match status" value="1"/>
</dbReference>
<dbReference type="SMART" id="SM00325">
    <property type="entry name" value="RhoGEF"/>
    <property type="match status" value="1"/>
</dbReference>
<dbReference type="SMART" id="SM00326">
    <property type="entry name" value="SH3"/>
    <property type="match status" value="6"/>
</dbReference>
<dbReference type="SUPFAM" id="SSF103657">
    <property type="entry name" value="BAR/IMD domain-like"/>
    <property type="match status" value="1"/>
</dbReference>
<dbReference type="SUPFAM" id="SSF48065">
    <property type="entry name" value="DBL homology domain (DH-domain)"/>
    <property type="match status" value="1"/>
</dbReference>
<dbReference type="SUPFAM" id="SSF50044">
    <property type="entry name" value="SH3-domain"/>
    <property type="match status" value="6"/>
</dbReference>
<dbReference type="PROSITE" id="PS51021">
    <property type="entry name" value="BAR"/>
    <property type="match status" value="1"/>
</dbReference>
<dbReference type="PROSITE" id="PS00741">
    <property type="entry name" value="DH_1"/>
    <property type="match status" value="1"/>
</dbReference>
<dbReference type="PROSITE" id="PS50010">
    <property type="entry name" value="DH_2"/>
    <property type="match status" value="1"/>
</dbReference>
<dbReference type="PROSITE" id="PS50002">
    <property type="entry name" value="SH3"/>
    <property type="match status" value="6"/>
</dbReference>
<feature type="chain" id="PRO_0000079960" description="Dynamin-binding protein">
    <location>
        <begin position="1"/>
        <end position="1580"/>
    </location>
</feature>
<feature type="domain" description="SH3 1" evidence="6">
    <location>
        <begin position="2"/>
        <end position="61"/>
    </location>
</feature>
<feature type="domain" description="SH3 2" evidence="6">
    <location>
        <begin position="66"/>
        <end position="127"/>
    </location>
</feature>
<feature type="domain" description="SH3 3" evidence="6">
    <location>
        <begin position="146"/>
        <end position="205"/>
    </location>
</feature>
<feature type="domain" description="SH3 4" evidence="6">
    <location>
        <begin position="244"/>
        <end position="303"/>
    </location>
</feature>
<feature type="domain" description="DH" evidence="5">
    <location>
        <begin position="783"/>
        <end position="970"/>
    </location>
</feature>
<feature type="domain" description="BAR" evidence="7">
    <location>
        <begin position="1011"/>
        <end position="1220"/>
    </location>
</feature>
<feature type="domain" description="SH3 5" evidence="6">
    <location>
        <begin position="1288"/>
        <end position="1351"/>
    </location>
</feature>
<feature type="domain" description="SH3 6" evidence="6">
    <location>
        <begin position="1516"/>
        <end position="1579"/>
    </location>
</feature>
<feature type="region of interest" description="Disordered" evidence="8">
    <location>
        <begin position="211"/>
        <end position="245"/>
    </location>
</feature>
<feature type="region of interest" description="Disordered" evidence="8">
    <location>
        <begin position="304"/>
        <end position="446"/>
    </location>
</feature>
<feature type="region of interest" description="Disordered" evidence="8">
    <location>
        <begin position="500"/>
        <end position="546"/>
    </location>
</feature>
<feature type="region of interest" description="Disordered" evidence="8">
    <location>
        <begin position="589"/>
        <end position="688"/>
    </location>
</feature>
<feature type="region of interest" description="Disordered" evidence="8">
    <location>
        <begin position="1356"/>
        <end position="1384"/>
    </location>
</feature>
<feature type="region of interest" description="Disordered" evidence="8">
    <location>
        <begin position="1426"/>
        <end position="1514"/>
    </location>
</feature>
<feature type="coiled-coil region" evidence="4">
    <location>
        <begin position="694"/>
        <end position="755"/>
    </location>
</feature>
<feature type="compositionally biased region" description="Acidic residues" evidence="8">
    <location>
        <begin position="229"/>
        <end position="243"/>
    </location>
</feature>
<feature type="compositionally biased region" description="Polar residues" evidence="8">
    <location>
        <begin position="422"/>
        <end position="439"/>
    </location>
</feature>
<feature type="compositionally biased region" description="Polar residues" evidence="8">
    <location>
        <begin position="502"/>
        <end position="513"/>
    </location>
</feature>
<feature type="compositionally biased region" description="Basic and acidic residues" evidence="8">
    <location>
        <begin position="516"/>
        <end position="527"/>
    </location>
</feature>
<feature type="compositionally biased region" description="Pro residues" evidence="8">
    <location>
        <begin position="608"/>
        <end position="617"/>
    </location>
</feature>
<feature type="compositionally biased region" description="Basic and acidic residues" evidence="8">
    <location>
        <begin position="671"/>
        <end position="682"/>
    </location>
</feature>
<feature type="compositionally biased region" description="Low complexity" evidence="8">
    <location>
        <begin position="1356"/>
        <end position="1365"/>
    </location>
</feature>
<feature type="compositionally biased region" description="Polar residues" evidence="8">
    <location>
        <begin position="1426"/>
        <end position="1440"/>
    </location>
</feature>
<feature type="modified residue" description="N-acetylmethionine" evidence="3">
    <location>
        <position position="1"/>
    </location>
</feature>
<feature type="modified residue" description="Phosphoserine" evidence="3">
    <location>
        <position position="683"/>
    </location>
</feature>
<feature type="splice variant" id="VSP_012081" description="In isoform 2." evidence="11">
    <location>
        <begin position="1"/>
        <end position="753"/>
    </location>
</feature>
<feature type="splice variant" id="VSP_012082" description="In isoform 2." evidence="11">
    <location>
        <begin position="851"/>
        <end position="860"/>
    </location>
</feature>
<feature type="splice variant" id="VSP_012083" description="In isoform 2." evidence="11">
    <original>K</original>
    <variation>KSLYHEW</variation>
    <location>
        <position position="910"/>
    </location>
</feature>
<feature type="sequence conflict" description="In Ref. 1; AAQ81299." evidence="12" ref="1">
    <original>S</original>
    <variation>G</variation>
    <location>
        <position position="1471"/>
    </location>
</feature>
<feature type="sequence conflict" description="In Ref. 1; AAQ81299." evidence="12" ref="1">
    <original>R</original>
    <variation>Q</variation>
    <location>
        <position position="1485"/>
    </location>
</feature>
<gene>
    <name evidence="14" type="primary">Dnmbp</name>
    <name evidence="11" type="synonym">Kiaa1010</name>
    <name evidence="10" type="synonym">Tuba</name>
</gene>
<reference key="1">
    <citation type="journal article" date="2003" name="J. Biol. Chem.">
        <title>Tuba, a novel protein containing bin/amphiphysin/Rvs and Dbl homology domains, links dynamin to regulation of the actin cytoskeleton.</title>
        <authorList>
            <person name="Salazar M.A."/>
            <person name="Kwiatkowski A.V."/>
            <person name="Pellegrini L."/>
            <person name="Cestra G."/>
            <person name="Butler M.H."/>
            <person name="Rossman K.L."/>
            <person name="Serna D.M."/>
            <person name="Sondek J."/>
            <person name="Gertler F.B."/>
            <person name="De Camilli P."/>
        </authorList>
    </citation>
    <scope>NUCLEOTIDE SEQUENCE [MRNA] (ISOFORM 1)</scope>
    <scope>FUNCTION</scope>
    <scope>ALTERNATIVE SPLICING</scope>
    <scope>SUBCELLULAR LOCATION</scope>
    <scope>INTERACTION WITH ACTIN; TUBULIN; HSP70; DNM1 AND A COMPLEX OF ACTIN-REGULATORY PROTEINS</scope>
    <source>
        <tissue>Embryo</tissue>
    </source>
</reference>
<reference key="2">
    <citation type="journal article" date="2003" name="DNA Res.">
        <title>Prediction of the coding sequences of mouse homologues of KIAA gene: III. The complete nucleotide sequences of 500 mouse KIAA-homologous cDNAs identified by screening of terminal sequences of cDNA clones randomly sampled from size-fractionated libraries.</title>
        <authorList>
            <person name="Okazaki N."/>
            <person name="Kikuno R."/>
            <person name="Ohara R."/>
            <person name="Inamoto S."/>
            <person name="Koseki H."/>
            <person name="Hiraoka S."/>
            <person name="Saga Y."/>
            <person name="Nagase T."/>
            <person name="Ohara O."/>
            <person name="Koga H."/>
        </authorList>
    </citation>
    <scope>NUCLEOTIDE SEQUENCE [LARGE SCALE MRNA] (ISOFORM 2)</scope>
    <source>
        <tissue>Embryonic tail</tissue>
    </source>
</reference>
<reference key="3">
    <citation type="journal article" date="2005" name="Science">
        <title>The transcriptional landscape of the mammalian genome.</title>
        <authorList>
            <person name="Carninci P."/>
            <person name="Kasukawa T."/>
            <person name="Katayama S."/>
            <person name="Gough J."/>
            <person name="Frith M.C."/>
            <person name="Maeda N."/>
            <person name="Oyama R."/>
            <person name="Ravasi T."/>
            <person name="Lenhard B."/>
            <person name="Wells C."/>
            <person name="Kodzius R."/>
            <person name="Shimokawa K."/>
            <person name="Bajic V.B."/>
            <person name="Brenner S.E."/>
            <person name="Batalov S."/>
            <person name="Forrest A.R."/>
            <person name="Zavolan M."/>
            <person name="Davis M.J."/>
            <person name="Wilming L.G."/>
            <person name="Aidinis V."/>
            <person name="Allen J.E."/>
            <person name="Ambesi-Impiombato A."/>
            <person name="Apweiler R."/>
            <person name="Aturaliya R.N."/>
            <person name="Bailey T.L."/>
            <person name="Bansal M."/>
            <person name="Baxter L."/>
            <person name="Beisel K.W."/>
            <person name="Bersano T."/>
            <person name="Bono H."/>
            <person name="Chalk A.M."/>
            <person name="Chiu K.P."/>
            <person name="Choudhary V."/>
            <person name="Christoffels A."/>
            <person name="Clutterbuck D.R."/>
            <person name="Crowe M.L."/>
            <person name="Dalla E."/>
            <person name="Dalrymple B.P."/>
            <person name="de Bono B."/>
            <person name="Della Gatta G."/>
            <person name="di Bernardo D."/>
            <person name="Down T."/>
            <person name="Engstrom P."/>
            <person name="Fagiolini M."/>
            <person name="Faulkner G."/>
            <person name="Fletcher C.F."/>
            <person name="Fukushima T."/>
            <person name="Furuno M."/>
            <person name="Futaki S."/>
            <person name="Gariboldi M."/>
            <person name="Georgii-Hemming P."/>
            <person name="Gingeras T.R."/>
            <person name="Gojobori T."/>
            <person name="Green R.E."/>
            <person name="Gustincich S."/>
            <person name="Harbers M."/>
            <person name="Hayashi Y."/>
            <person name="Hensch T.K."/>
            <person name="Hirokawa N."/>
            <person name="Hill D."/>
            <person name="Huminiecki L."/>
            <person name="Iacono M."/>
            <person name="Ikeo K."/>
            <person name="Iwama A."/>
            <person name="Ishikawa T."/>
            <person name="Jakt M."/>
            <person name="Kanapin A."/>
            <person name="Katoh M."/>
            <person name="Kawasawa Y."/>
            <person name="Kelso J."/>
            <person name="Kitamura H."/>
            <person name="Kitano H."/>
            <person name="Kollias G."/>
            <person name="Krishnan S.P."/>
            <person name="Kruger A."/>
            <person name="Kummerfeld S.K."/>
            <person name="Kurochkin I.V."/>
            <person name="Lareau L.F."/>
            <person name="Lazarevic D."/>
            <person name="Lipovich L."/>
            <person name="Liu J."/>
            <person name="Liuni S."/>
            <person name="McWilliam S."/>
            <person name="Madan Babu M."/>
            <person name="Madera M."/>
            <person name="Marchionni L."/>
            <person name="Matsuda H."/>
            <person name="Matsuzawa S."/>
            <person name="Miki H."/>
            <person name="Mignone F."/>
            <person name="Miyake S."/>
            <person name="Morris K."/>
            <person name="Mottagui-Tabar S."/>
            <person name="Mulder N."/>
            <person name="Nakano N."/>
            <person name="Nakauchi H."/>
            <person name="Ng P."/>
            <person name="Nilsson R."/>
            <person name="Nishiguchi S."/>
            <person name="Nishikawa S."/>
            <person name="Nori F."/>
            <person name="Ohara O."/>
            <person name="Okazaki Y."/>
            <person name="Orlando V."/>
            <person name="Pang K.C."/>
            <person name="Pavan W.J."/>
            <person name="Pavesi G."/>
            <person name="Pesole G."/>
            <person name="Petrovsky N."/>
            <person name="Piazza S."/>
            <person name="Reed J."/>
            <person name="Reid J.F."/>
            <person name="Ring B.Z."/>
            <person name="Ringwald M."/>
            <person name="Rost B."/>
            <person name="Ruan Y."/>
            <person name="Salzberg S.L."/>
            <person name="Sandelin A."/>
            <person name="Schneider C."/>
            <person name="Schoenbach C."/>
            <person name="Sekiguchi K."/>
            <person name="Semple C.A."/>
            <person name="Seno S."/>
            <person name="Sessa L."/>
            <person name="Sheng Y."/>
            <person name="Shibata Y."/>
            <person name="Shimada H."/>
            <person name="Shimada K."/>
            <person name="Silva D."/>
            <person name="Sinclair B."/>
            <person name="Sperling S."/>
            <person name="Stupka E."/>
            <person name="Sugiura K."/>
            <person name="Sultana R."/>
            <person name="Takenaka Y."/>
            <person name="Taki K."/>
            <person name="Tammoja K."/>
            <person name="Tan S.L."/>
            <person name="Tang S."/>
            <person name="Taylor M.S."/>
            <person name="Tegner J."/>
            <person name="Teichmann S.A."/>
            <person name="Ueda H.R."/>
            <person name="van Nimwegen E."/>
            <person name="Verardo R."/>
            <person name="Wei C.L."/>
            <person name="Yagi K."/>
            <person name="Yamanishi H."/>
            <person name="Zabarovsky E."/>
            <person name="Zhu S."/>
            <person name="Zimmer A."/>
            <person name="Hide W."/>
            <person name="Bult C."/>
            <person name="Grimmond S.M."/>
            <person name="Teasdale R.D."/>
            <person name="Liu E.T."/>
            <person name="Brusic V."/>
            <person name="Quackenbush J."/>
            <person name="Wahlestedt C."/>
            <person name="Mattick J.S."/>
            <person name="Hume D.A."/>
            <person name="Kai C."/>
            <person name="Sasaki D."/>
            <person name="Tomaru Y."/>
            <person name="Fukuda S."/>
            <person name="Kanamori-Katayama M."/>
            <person name="Suzuki M."/>
            <person name="Aoki J."/>
            <person name="Arakawa T."/>
            <person name="Iida J."/>
            <person name="Imamura K."/>
            <person name="Itoh M."/>
            <person name="Kato T."/>
            <person name="Kawaji H."/>
            <person name="Kawagashira N."/>
            <person name="Kawashima T."/>
            <person name="Kojima M."/>
            <person name="Kondo S."/>
            <person name="Konno H."/>
            <person name="Nakano K."/>
            <person name="Ninomiya N."/>
            <person name="Nishio T."/>
            <person name="Okada M."/>
            <person name="Plessy C."/>
            <person name="Shibata K."/>
            <person name="Shiraki T."/>
            <person name="Suzuki S."/>
            <person name="Tagami M."/>
            <person name="Waki K."/>
            <person name="Watahiki A."/>
            <person name="Okamura-Oho Y."/>
            <person name="Suzuki H."/>
            <person name="Kawai J."/>
            <person name="Hayashizaki Y."/>
        </authorList>
    </citation>
    <scope>NUCLEOTIDE SEQUENCE [LARGE SCALE MRNA] OF 954-1318 (ISOFORM 1)</scope>
    <source>
        <strain>C57BL/6J</strain>
    </source>
</reference>
<reference key="4">
    <citation type="journal article" date="2004" name="Genome Res.">
        <title>The status, quality, and expansion of the NIH full-length cDNA project: the Mammalian Gene Collection (MGC).</title>
        <authorList>
            <consortium name="The MGC Project Team"/>
        </authorList>
    </citation>
    <scope>NUCLEOTIDE SEQUENCE [LARGE SCALE MRNA] OF 975-1580 (ISOFORM 1)</scope>
    <source>
        <strain>FVB/N</strain>
        <tissue>Liver</tissue>
    </source>
</reference>
<reference key="5">
    <citation type="journal article" date="2010" name="Cell">
        <title>A tissue-specific atlas of mouse protein phosphorylation and expression.</title>
        <authorList>
            <person name="Huttlin E.L."/>
            <person name="Jedrychowski M.P."/>
            <person name="Elias J.E."/>
            <person name="Goswami T."/>
            <person name="Rad R."/>
            <person name="Beausoleil S.A."/>
            <person name="Villen J."/>
            <person name="Haas W."/>
            <person name="Sowa M.E."/>
            <person name="Gygi S.P."/>
        </authorList>
    </citation>
    <scope>IDENTIFICATION BY MASS SPECTROMETRY [LARGE SCALE ANALYSIS]</scope>
    <source>
        <tissue>Brown adipose tissue</tissue>
        <tissue>Heart</tissue>
        <tissue>Kidney</tissue>
        <tissue>Lung</tissue>
        <tissue>Testis</tissue>
    </source>
</reference>
<protein>
    <recommendedName>
        <fullName evidence="3">Dynamin-binding protein</fullName>
    </recommendedName>
    <alternativeName>
        <fullName evidence="13">Scaffold protein Tuba</fullName>
    </alternativeName>
</protein>